<organism>
    <name type="scientific">Homo sapiens</name>
    <name type="common">Human</name>
    <dbReference type="NCBI Taxonomy" id="9606"/>
    <lineage>
        <taxon>Eukaryota</taxon>
        <taxon>Metazoa</taxon>
        <taxon>Chordata</taxon>
        <taxon>Craniata</taxon>
        <taxon>Vertebrata</taxon>
        <taxon>Euteleostomi</taxon>
        <taxon>Mammalia</taxon>
        <taxon>Eutheria</taxon>
        <taxon>Euarchontoglires</taxon>
        <taxon>Primates</taxon>
        <taxon>Haplorrhini</taxon>
        <taxon>Catarrhini</taxon>
        <taxon>Hominidae</taxon>
        <taxon>Homo</taxon>
    </lineage>
</organism>
<gene>
    <name type="primary">URB1</name>
    <name type="synonym">C21orf108</name>
    <name type="synonym">KIAA0539</name>
    <name type="synonym">NOP254</name>
    <name type="synonym">NPA1</name>
</gene>
<keyword id="KW-0539">Nucleus</keyword>
<keyword id="KW-0597">Phosphoprotein</keyword>
<keyword id="KW-1267">Proteomics identification</keyword>
<keyword id="KW-1185">Reference proteome</keyword>
<dbReference type="EMBL" id="AP000266">
    <property type="status" value="NOT_ANNOTATED_CDS"/>
    <property type="molecule type" value="Genomic_DNA"/>
</dbReference>
<dbReference type="EMBL" id="AP000267">
    <property type="status" value="NOT_ANNOTATED_CDS"/>
    <property type="molecule type" value="Genomic_DNA"/>
</dbReference>
<dbReference type="EMBL" id="AP000268">
    <property type="status" value="NOT_ANNOTATED_CDS"/>
    <property type="molecule type" value="Genomic_DNA"/>
</dbReference>
<dbReference type="EMBL" id="AP000269">
    <property type="status" value="NOT_ANNOTATED_CDS"/>
    <property type="molecule type" value="Genomic_DNA"/>
</dbReference>
<dbReference type="EMBL" id="CH471079">
    <property type="protein sequence ID" value="EAX09876.1"/>
    <property type="molecule type" value="Genomic_DNA"/>
</dbReference>
<dbReference type="EMBL" id="CH471079">
    <property type="protein sequence ID" value="EAX09877.1"/>
    <property type="molecule type" value="Genomic_DNA"/>
</dbReference>
<dbReference type="EMBL" id="CT001610">
    <property type="status" value="NOT_ANNOTATED_CDS"/>
    <property type="molecule type" value="mRNA"/>
</dbReference>
<dbReference type="EMBL" id="AF231919">
    <property type="protein sequence ID" value="AAF72943.1"/>
    <property type="molecule type" value="mRNA"/>
</dbReference>
<dbReference type="EMBL" id="AB011111">
    <property type="protein sequence ID" value="BAA25465.2"/>
    <property type="molecule type" value="mRNA"/>
</dbReference>
<dbReference type="EMBL" id="AF432264">
    <property type="protein sequence ID" value="AAL28110.1"/>
    <property type="molecule type" value="mRNA"/>
</dbReference>
<dbReference type="CCDS" id="CCDS46645.1"/>
<dbReference type="PIR" id="T00269">
    <property type="entry name" value="T00269"/>
</dbReference>
<dbReference type="RefSeq" id="NP_055640.2">
    <property type="nucleotide sequence ID" value="NM_014825.2"/>
</dbReference>
<dbReference type="SMR" id="O60287"/>
<dbReference type="BioGRID" id="115207">
    <property type="interactions" value="174"/>
</dbReference>
<dbReference type="FunCoup" id="O60287">
    <property type="interactions" value="2031"/>
</dbReference>
<dbReference type="IntAct" id="O60287">
    <property type="interactions" value="101"/>
</dbReference>
<dbReference type="MINT" id="O60287"/>
<dbReference type="STRING" id="9606.ENSP00000372199"/>
<dbReference type="GlyCosmos" id="O60287">
    <property type="glycosylation" value="1 site, 1 glycan"/>
</dbReference>
<dbReference type="GlyGen" id="O60287">
    <property type="glycosylation" value="1 site, 1 O-linked glycan (1 site)"/>
</dbReference>
<dbReference type="iPTMnet" id="O60287"/>
<dbReference type="PhosphoSitePlus" id="O60287"/>
<dbReference type="SwissPalm" id="O60287"/>
<dbReference type="BioMuta" id="URB1"/>
<dbReference type="jPOST" id="O60287"/>
<dbReference type="MassIVE" id="O60287"/>
<dbReference type="PaxDb" id="9606-ENSP00000372199"/>
<dbReference type="PeptideAtlas" id="O60287"/>
<dbReference type="ProteomicsDB" id="49316"/>
<dbReference type="Pumba" id="O60287"/>
<dbReference type="Antibodypedia" id="4954">
    <property type="antibodies" value="66 antibodies from 24 providers"/>
</dbReference>
<dbReference type="DNASU" id="9875"/>
<dbReference type="Ensembl" id="ENST00000382751.4">
    <property type="protein sequence ID" value="ENSP00000372199.3"/>
    <property type="gene ID" value="ENSG00000142207.7"/>
</dbReference>
<dbReference type="GeneID" id="9875"/>
<dbReference type="KEGG" id="hsa:9875"/>
<dbReference type="MANE-Select" id="ENST00000382751.4">
    <property type="protein sequence ID" value="ENSP00000372199.3"/>
    <property type="RefSeq nucleotide sequence ID" value="NM_014825.3"/>
    <property type="RefSeq protein sequence ID" value="NP_055640.2"/>
</dbReference>
<dbReference type="UCSC" id="uc002ypn.3">
    <property type="organism name" value="human"/>
</dbReference>
<dbReference type="AGR" id="HGNC:17344"/>
<dbReference type="CTD" id="9875"/>
<dbReference type="DisGeNET" id="9875"/>
<dbReference type="GeneCards" id="URB1"/>
<dbReference type="HGNC" id="HGNC:17344">
    <property type="gene designation" value="URB1"/>
</dbReference>
<dbReference type="HPA" id="ENSG00000142207">
    <property type="expression patterns" value="Low tissue specificity"/>
</dbReference>
<dbReference type="MIM" id="608865">
    <property type="type" value="gene"/>
</dbReference>
<dbReference type="neXtProt" id="NX_O60287"/>
<dbReference type="OpenTargets" id="ENSG00000142207"/>
<dbReference type="PharmGKB" id="PA162408676"/>
<dbReference type="VEuPathDB" id="HostDB:ENSG00000142207"/>
<dbReference type="eggNOG" id="KOG1791">
    <property type="taxonomic scope" value="Eukaryota"/>
</dbReference>
<dbReference type="GeneTree" id="ENSGT00390000014210"/>
<dbReference type="HOGENOM" id="CLU_001185_0_0_1"/>
<dbReference type="InParanoid" id="O60287"/>
<dbReference type="OMA" id="VVWVWQS"/>
<dbReference type="OrthoDB" id="72892at2759"/>
<dbReference type="PAN-GO" id="O60287">
    <property type="GO annotations" value="3 GO annotations based on evolutionary models"/>
</dbReference>
<dbReference type="PhylomeDB" id="O60287"/>
<dbReference type="TreeFam" id="TF313756"/>
<dbReference type="PathwayCommons" id="O60287"/>
<dbReference type="SignaLink" id="O60287"/>
<dbReference type="BioGRID-ORCS" id="9875">
    <property type="hits" value="668 hits in 1167 CRISPR screens"/>
</dbReference>
<dbReference type="CD-CODE" id="91857CE7">
    <property type="entry name" value="Nucleolus"/>
</dbReference>
<dbReference type="ChiTaRS" id="URB1">
    <property type="organism name" value="human"/>
</dbReference>
<dbReference type="GenomeRNAi" id="9875"/>
<dbReference type="Pharos" id="O60287">
    <property type="development level" value="Tbio"/>
</dbReference>
<dbReference type="PRO" id="PR:O60287"/>
<dbReference type="Proteomes" id="UP000005640">
    <property type="component" value="Chromosome 21"/>
</dbReference>
<dbReference type="RNAct" id="O60287">
    <property type="molecule type" value="protein"/>
</dbReference>
<dbReference type="Bgee" id="ENSG00000142207">
    <property type="expression patterns" value="Expressed in endothelial cell and 143 other cell types or tissues"/>
</dbReference>
<dbReference type="GO" id="GO:0001650">
    <property type="term" value="C:fibrillar center"/>
    <property type="evidence" value="ECO:0000314"/>
    <property type="project" value="HPA"/>
</dbReference>
<dbReference type="GO" id="GO:0005730">
    <property type="term" value="C:nucleolus"/>
    <property type="evidence" value="ECO:0000314"/>
    <property type="project" value="UniProtKB"/>
</dbReference>
<dbReference type="GO" id="GO:0003723">
    <property type="term" value="F:RNA binding"/>
    <property type="evidence" value="ECO:0007005"/>
    <property type="project" value="UniProtKB"/>
</dbReference>
<dbReference type="GO" id="GO:0000466">
    <property type="term" value="P:maturation of 5.8S rRNA from tricistronic rRNA transcript (SSU-rRNA, 5.8S rRNA, LSU-rRNA)"/>
    <property type="evidence" value="ECO:0000318"/>
    <property type="project" value="GO_Central"/>
</dbReference>
<dbReference type="GO" id="GO:0000463">
    <property type="term" value="P:maturation of LSU-rRNA from tricistronic rRNA transcript (SSU-rRNA, 5.8S rRNA, LSU-rRNA)"/>
    <property type="evidence" value="ECO:0000318"/>
    <property type="project" value="GO_Central"/>
</dbReference>
<dbReference type="InterPro" id="IPR016024">
    <property type="entry name" value="ARM-type_fold"/>
</dbReference>
<dbReference type="InterPro" id="IPR032436">
    <property type="entry name" value="NopRA1_C"/>
</dbReference>
<dbReference type="InterPro" id="IPR021714">
    <property type="entry name" value="Npa1_N"/>
</dbReference>
<dbReference type="InterPro" id="IPR039844">
    <property type="entry name" value="URB1"/>
</dbReference>
<dbReference type="PANTHER" id="PTHR13500:SF0">
    <property type="entry name" value="NUCLEOLAR PRE-RIBOSOMAL-ASSOCIATED PROTEIN 1"/>
    <property type="match status" value="1"/>
</dbReference>
<dbReference type="PANTHER" id="PTHR13500">
    <property type="entry name" value="NUCLEOLAR PRERIBOSOMAL-ASSOCIATED PROTEIN 1"/>
    <property type="match status" value="1"/>
</dbReference>
<dbReference type="Pfam" id="PF16201">
    <property type="entry name" value="NopRA1"/>
    <property type="match status" value="1"/>
</dbReference>
<dbReference type="Pfam" id="PF11707">
    <property type="entry name" value="Npa1"/>
    <property type="match status" value="1"/>
</dbReference>
<dbReference type="SUPFAM" id="SSF48371">
    <property type="entry name" value="ARM repeat"/>
    <property type="match status" value="1"/>
</dbReference>
<accession>O60287</accession>
<accession>D3DSE5</accession>
<accession>Q96NX1</accession>
<accession>Q9NYQ1</accession>
<sequence>MGVPKRKASGGQDGAASSAGAAKRARKEELTGVRFKAQLKDPQGPGPGLEAFVSAAKKLPREDVYDVVEGYIKISVECVEIFQLLSGEKRPESETMLIFQVFEAILLRTASDLSHFHVVGTNIVKKLMNNHMKLICESLYASGYRLARACLSLMTAMVTQGPEAARDVCSHFDLNKKTLYTLVTKRDSKGVYDVRQAYVQFALSFLIAGDDSTIVQVLEVKEFIPCIFSSGIKEDRISTINILLSTLKTKVVHNKNITKTQKVRFFTGQLLNHIASLYNWNGITDVNPENVKVSAEEAGKTMVRELVHNFLMDLCCSLKHGINFYDASLGTFGRGGNLTLLHFLLGLKTAADDDLVADLVVNILKVCPDLLNKYFKEVTFSFIPRAKSTWLNNIKLLNKIYEAQPEISRAFQTREFIPLPRLLAMVMVTTVPLVCNKSMFTQALNLDSTSVRHTALSLISVILKRALKTVDHCLNKEVWQESGVYTAVMMEEFVQLFREALSKILPDLNTVVWVWQSLKKQETKQDDKKGQKRSDGPPAACDAHQCDDAETILLKAVLLQVICLYQKVVPHVVMQYNFDFSKLLKGVISEQGLREEVPPILQHHMLKVALELPASKFLWLKAQEGPDAEIIGGERSVFYLLMKMFVTSSHLQLKSLTKLLIMKILRDTGVFEHTWKELELWLEHLENTMEEDKETVIQFLERILLTLVANPYSYTDKASDFVQEASMLQATMTKQEADDMSIPISHIDDVLDMVDVLVEGSEGLDEEIGFTLSEDMILLTFPFSAVVPAALEARNKLLLGTGNEAAENVVTYLTAVLTDLLHTQRDPLALCLLLQAYDKLEPPCLVPCCQQLSRFNRYYSLWIPEQAREAWLLQAQGSPSPPALPLASSFTALLQAAYESQALRDEHIQVQLQATMPHLSMQQVLLAAKQVLLYLRSTVENFGQLGRSVGPPLLQLFLDLLRRLVVHCEQLDAQNQQRCEAARAEADLFLDMESVASLELANDQTLEEVLVAILRHPTLEGWFLALEQQALPPHTLSPVLVKLLATHFSAGVLQLLAASAPILQNIGQLGLLARYSEAITQSVLKELQNRRAGPATSPPKTPPQLEALQELHPYMEGAQLREVTLALLSLPETHLVTQQPTKSPGKERHLNALGKTLVQLLTCSPQDQLQSGELLWSSEYVRGLGALLPTLAVDELDTVLLHTLQRDPVLAPAVGADLLDYCLARRTQAALSIAALLLQESCTHLLWFEQWCLQAGPGLGLQGDLDDFLPLIHVYLQCRTRSHFTRPAGVSSAVIPVLRKTLWRQLQSRLLSTDSPPASGLYQEILAQLVPFARAKDLSVLMDRLPSLLHTPSSHKRWIVADSISAALEGSAEELCAWRRTLLESCVKWLIVSFSGGQQDDDNTQNQEKEMLLRLNALLHALNEVDPGDWQKFVKKGLKFRYQDHTFLKMLLTAVQLLYSPESSVRTKLIQLPVVYVMLMQHSLFLPTLLTSDGEESPDSQVKEALVDLMLTVVEMCPSVCESSHFAVLLGAYGATLSVLDQKILLLLRAYEQNKLSLINFRVLLWGPAAVEHHKTCRSLGRSLWQQPSVGDILRLLDRDRMMQTILHFPQNRRLLPPEDTQELIFKDKSRVDLDGLYDPCFLLQLFSELTRPEFVVDCRKFLDSNALGLTVTALSSYDPQMRAIAYHVLAAYYSHLEGARFQEQSQLLYLLDVVRNGIRTQDMRLTFTLALFIAKAALQILKPEEHMYLKVSNFLLSHEYLNMDKVPGFYQFFYSSDFEQKTEQKWVFGVLRQGIRDKQCYELCARRGIFHIILSFFHSPLCDEAAQNWILEILQNAAQVARSAYEIIRDYSLLTWILHILESKFLETPLLSNVISLLHTLWVTNLGDKAVEWESQRLCQPSSQEPAKRLALHLVNEFLYVLIVLMKHLRPTLAPVQLTNFFGTLDSVLRYRATVIQAFRDMNRFTVNETVLSTKDVLVLLHKWSLIERDLKLQEDLRAAIEKAQARELMKMLKDKNKPVMPARAKGPRGRKRRPGEAEEMADPELMASTLETCKGLLRSILTYWRPVIPGPDPTQEPVDSASPESDAPGPVYAAASLAVSWVLRSVAEHPLSRAEAAGLIGWLKSHILPHPVVVADLLKDSAVRSSIFRLYSRLCGAEGLAGPVQEVACLFNTVMLQLVAAQGRAGSPFHPAMEALSLSSLSEKDEATQASAAFLVSLYIKDIWLGAQRPDTLLTHVRMVCEAADDAPSSEEEAIVVLCKDAASAASDA</sequence>
<feature type="chain" id="PRO_0000057939" description="Nucleolar pre-ribosomal-associated protein 1">
    <location>
        <begin position="1"/>
        <end position="2271"/>
    </location>
</feature>
<feature type="region of interest" description="Disordered" evidence="2">
    <location>
        <begin position="1"/>
        <end position="43"/>
    </location>
</feature>
<feature type="region of interest" description="Disordered" evidence="2">
    <location>
        <begin position="2021"/>
        <end position="2042"/>
    </location>
</feature>
<feature type="modified residue" description="Phosphoserine" evidence="1">
    <location>
        <position position="17"/>
    </location>
</feature>
<feature type="modified residue" description="Phosphoserine" evidence="8">
    <location>
        <position position="1143"/>
    </location>
</feature>
<feature type="sequence variant" id="VAR_060586" description="In dbSNP:rs3761342." evidence="3 6">
    <original>V</original>
    <variation>L</variation>
    <location>
        <position position="1791"/>
    </location>
</feature>
<feature type="sequence variant" id="VAR_059705" description="In dbSNP:rs762225.">
    <original>P</original>
    <variation>R</variation>
    <location>
        <position position="2071"/>
    </location>
</feature>
<feature type="sequence conflict" description="In Ref. 5; BAA25465." evidence="7" ref="5">
    <original>P</original>
    <variation>S</variation>
    <location>
        <position position="368"/>
    </location>
</feature>
<name>NPA1P_HUMAN</name>
<reference key="1">
    <citation type="journal article" date="2000" name="Nature">
        <title>The DNA sequence of human chromosome 21.</title>
        <authorList>
            <person name="Hattori M."/>
            <person name="Fujiyama A."/>
            <person name="Taylor T.D."/>
            <person name="Watanabe H."/>
            <person name="Yada T."/>
            <person name="Park H.-S."/>
            <person name="Toyoda A."/>
            <person name="Ishii K."/>
            <person name="Totoki Y."/>
            <person name="Choi D.-K."/>
            <person name="Groner Y."/>
            <person name="Soeda E."/>
            <person name="Ohki M."/>
            <person name="Takagi T."/>
            <person name="Sakaki Y."/>
            <person name="Taudien S."/>
            <person name="Blechschmidt K."/>
            <person name="Polley A."/>
            <person name="Menzel U."/>
            <person name="Delabar J."/>
            <person name="Kumpf K."/>
            <person name="Lehmann R."/>
            <person name="Patterson D."/>
            <person name="Reichwald K."/>
            <person name="Rump A."/>
            <person name="Schillhabel M."/>
            <person name="Schudy A."/>
            <person name="Zimmermann W."/>
            <person name="Rosenthal A."/>
            <person name="Kudoh J."/>
            <person name="Shibuya K."/>
            <person name="Kawasaki K."/>
            <person name="Asakawa S."/>
            <person name="Shintani A."/>
            <person name="Sasaki T."/>
            <person name="Nagamine K."/>
            <person name="Mitsuyama S."/>
            <person name="Antonarakis S.E."/>
            <person name="Minoshima S."/>
            <person name="Shimizu N."/>
            <person name="Nordsiek G."/>
            <person name="Hornischer K."/>
            <person name="Brandt P."/>
            <person name="Scharfe M."/>
            <person name="Schoen O."/>
            <person name="Desario A."/>
            <person name="Reichelt J."/>
            <person name="Kauer G."/>
            <person name="Bloecker H."/>
            <person name="Ramser J."/>
            <person name="Beck A."/>
            <person name="Klages S."/>
            <person name="Hennig S."/>
            <person name="Riesselmann L."/>
            <person name="Dagand E."/>
            <person name="Wehrmeyer S."/>
            <person name="Borzym K."/>
            <person name="Gardiner K."/>
            <person name="Nizetic D."/>
            <person name="Francis F."/>
            <person name="Lehrach H."/>
            <person name="Reinhardt R."/>
            <person name="Yaspo M.-L."/>
        </authorList>
    </citation>
    <scope>NUCLEOTIDE SEQUENCE [LARGE SCALE GENOMIC DNA]</scope>
</reference>
<reference key="2">
    <citation type="submission" date="2005-09" db="EMBL/GenBank/DDBJ databases">
        <authorList>
            <person name="Mural R.J."/>
            <person name="Istrail S."/>
            <person name="Sutton G.G."/>
            <person name="Florea L."/>
            <person name="Halpern A.L."/>
            <person name="Mobarry C.M."/>
            <person name="Lippert R."/>
            <person name="Walenz B."/>
            <person name="Shatkay H."/>
            <person name="Dew I."/>
            <person name="Miller J.R."/>
            <person name="Flanigan M.J."/>
            <person name="Edwards N.J."/>
            <person name="Bolanos R."/>
            <person name="Fasulo D."/>
            <person name="Halldorsson B.V."/>
            <person name="Hannenhalli S."/>
            <person name="Turner R."/>
            <person name="Yooseph S."/>
            <person name="Lu F."/>
            <person name="Nusskern D.R."/>
            <person name="Shue B.C."/>
            <person name="Zheng X.H."/>
            <person name="Zhong F."/>
            <person name="Delcher A.L."/>
            <person name="Huson D.H."/>
            <person name="Kravitz S.A."/>
            <person name="Mouchard L."/>
            <person name="Reinert K."/>
            <person name="Remington K.A."/>
            <person name="Clark A.G."/>
            <person name="Waterman M.S."/>
            <person name="Eichler E.E."/>
            <person name="Adams M.D."/>
            <person name="Hunkapiller M.W."/>
            <person name="Myers E.W."/>
            <person name="Venter J.C."/>
        </authorList>
    </citation>
    <scope>NUCLEOTIDE SEQUENCE [LARGE SCALE GENOMIC DNA]</scope>
</reference>
<reference key="3">
    <citation type="journal article" date="2007" name="BMC Genomics">
        <title>The full-ORF clone resource of the German cDNA consortium.</title>
        <authorList>
            <person name="Bechtel S."/>
            <person name="Rosenfelder H."/>
            <person name="Duda A."/>
            <person name="Schmidt C.P."/>
            <person name="Ernst U."/>
            <person name="Wellenreuther R."/>
            <person name="Mehrle A."/>
            <person name="Schuster C."/>
            <person name="Bahr A."/>
            <person name="Bloecker H."/>
            <person name="Heubner D."/>
            <person name="Hoerlein A."/>
            <person name="Michel G."/>
            <person name="Wedler H."/>
            <person name="Koehrer K."/>
            <person name="Ottenwaelder B."/>
            <person name="Poustka A."/>
            <person name="Wiemann S."/>
            <person name="Schupp I."/>
        </authorList>
    </citation>
    <scope>NUCLEOTIDE SEQUENCE [LARGE SCALE MRNA] OF 1-186</scope>
    <source>
        <tissue>T-cell</tissue>
    </source>
</reference>
<reference key="4">
    <citation type="journal article" date="2000" name="Gene">
        <title>Criteria for gene identification and features of genome organization: analysis of 6.5 Mb of DNA sequence from human chromosome 21.</title>
        <authorList>
            <person name="Slavov D."/>
            <person name="Hattori M."/>
            <person name="Sakaki Y."/>
            <person name="Rosenthal A."/>
            <person name="Shimizu N."/>
            <person name="Minoshima S."/>
            <person name="Kudoh J."/>
            <person name="Yaspo M.-L."/>
            <person name="Ramser J."/>
            <person name="Reinhardt R."/>
            <person name="Reimer C."/>
            <person name="Clancy K."/>
            <person name="Rynditch A."/>
            <person name="Gardiner K."/>
        </authorList>
    </citation>
    <scope>NUCLEOTIDE SEQUENCE [MRNA] OF 24-2271</scope>
    <scope>VARIANT LEU-1791</scope>
</reference>
<reference key="5">
    <citation type="journal article" date="1998" name="DNA Res.">
        <title>Prediction of the coding sequences of unidentified human genes. IX. The complete sequences of 100 new cDNA clones from brain which can code for large proteins in vitro.</title>
        <authorList>
            <person name="Nagase T."/>
            <person name="Ishikawa K."/>
            <person name="Miyajima N."/>
            <person name="Tanaka A."/>
            <person name="Kotani H."/>
            <person name="Nomura N."/>
            <person name="Ohara O."/>
        </authorList>
    </citation>
    <scope>NUCLEOTIDE SEQUENCE [LARGE SCALE MRNA] OF 226-2271</scope>
    <scope>VARIANT LEU-1791</scope>
    <source>
        <tissue>Brain</tissue>
    </source>
</reference>
<reference key="6">
    <citation type="journal article" date="2002" name="DNA Res.">
        <title>Construction of expression-ready cDNA clones for KIAA genes: manual curation of 330 KIAA cDNA clones.</title>
        <authorList>
            <person name="Nakajima D."/>
            <person name="Okazaki N."/>
            <person name="Yamakawa H."/>
            <person name="Kikuno R."/>
            <person name="Ohara O."/>
            <person name="Nagase T."/>
        </authorList>
    </citation>
    <scope>SEQUENCE REVISION</scope>
</reference>
<reference key="7">
    <citation type="submission" date="2001-10" db="EMBL/GenBank/DDBJ databases">
        <title>Homo sapiens KIAA0539 mRNA.</title>
        <authorList>
            <person name="Casadei R."/>
            <person name="Strippoli P."/>
            <person name="D'Addabbo P."/>
            <person name="Canaider S."/>
            <person name="Lenzi L."/>
            <person name="Vitale L."/>
            <person name="Giannone S."/>
            <person name="Carinci P."/>
            <person name="Zannotti M."/>
        </authorList>
    </citation>
    <scope>NUCLEOTIDE SEQUENCE [MRNA] OF 1297-1538</scope>
    <source>
        <tissue>Placenta</tissue>
    </source>
</reference>
<reference key="8">
    <citation type="journal article" date="2002" name="Mol. Biol. Cell">
        <title>Functional proteomic analysis of human nucleolus.</title>
        <authorList>
            <person name="Scherl A."/>
            <person name="Coute Y."/>
            <person name="Deon C."/>
            <person name="Calle A."/>
            <person name="Kindbeiter K."/>
            <person name="Sanchez J.-C."/>
            <person name="Greco A."/>
            <person name="Hochstrasser D.F."/>
            <person name="Diaz J.-J."/>
        </authorList>
    </citation>
    <scope>SUBCELLULAR LOCATION [LARGE SCALE ANALYSIS]</scope>
    <source>
        <tissue>Cervix carcinoma</tissue>
    </source>
</reference>
<reference key="9">
    <citation type="journal article" date="2006" name="Nucleic Acids Res.">
        <title>NOP132 is required for proper nucleolus localization of DEAD-box RNA helicase DDX47.</title>
        <authorList>
            <person name="Sekiguchi T."/>
            <person name="Hayano T."/>
            <person name="Yanagida M."/>
            <person name="Takahashi N."/>
            <person name="Nishimoto T."/>
        </authorList>
    </citation>
    <scope>SUBCELLULAR LOCATION</scope>
</reference>
<reference key="10">
    <citation type="journal article" date="2008" name="Proc. Natl. Acad. Sci. U.S.A.">
        <title>A quantitative atlas of mitotic phosphorylation.</title>
        <authorList>
            <person name="Dephoure N."/>
            <person name="Zhou C."/>
            <person name="Villen J."/>
            <person name="Beausoleil S.A."/>
            <person name="Bakalarski C.E."/>
            <person name="Elledge S.J."/>
            <person name="Gygi S.P."/>
        </authorList>
    </citation>
    <scope>IDENTIFICATION BY MASS SPECTROMETRY [LARGE SCALE ANALYSIS]</scope>
    <source>
        <tissue>Cervix carcinoma</tissue>
    </source>
</reference>
<reference key="11">
    <citation type="journal article" date="2010" name="Sci. Signal.">
        <title>Quantitative phosphoproteomics reveals widespread full phosphorylation site occupancy during mitosis.</title>
        <authorList>
            <person name="Olsen J.V."/>
            <person name="Vermeulen M."/>
            <person name="Santamaria A."/>
            <person name="Kumar C."/>
            <person name="Miller M.L."/>
            <person name="Jensen L.J."/>
            <person name="Gnad F."/>
            <person name="Cox J."/>
            <person name="Jensen T.S."/>
            <person name="Nigg E.A."/>
            <person name="Brunak S."/>
            <person name="Mann M."/>
        </authorList>
    </citation>
    <scope>PHOSPHORYLATION [LARGE SCALE ANALYSIS] AT SER-1143</scope>
    <scope>IDENTIFICATION BY MASS SPECTROMETRY [LARGE SCALE ANALYSIS]</scope>
    <source>
        <tissue>Cervix carcinoma</tissue>
    </source>
</reference>
<protein>
    <recommendedName>
        <fullName>Nucleolar pre-ribosomal-associated protein 1</fullName>
    </recommendedName>
    <alternativeName>
        <fullName>Nucleolar protein 254 kDa</fullName>
    </alternativeName>
    <alternativeName>
        <fullName>URB1 ribosome biogenesis 1 homolog</fullName>
    </alternativeName>
</protein>
<proteinExistence type="evidence at protein level"/>
<comment type="subcellular location">
    <subcellularLocation>
        <location evidence="4 5">Nucleus</location>
        <location evidence="4 5">Nucleolus</location>
    </subcellularLocation>
</comment>
<evidence type="ECO:0000250" key="1">
    <source>
        <dbReference type="UniProtKB" id="Q571H0"/>
    </source>
</evidence>
<evidence type="ECO:0000256" key="2">
    <source>
        <dbReference type="SAM" id="MobiDB-lite"/>
    </source>
</evidence>
<evidence type="ECO:0000269" key="3">
    <source>
    </source>
</evidence>
<evidence type="ECO:0000269" key="4">
    <source>
    </source>
</evidence>
<evidence type="ECO:0000269" key="5">
    <source>
    </source>
</evidence>
<evidence type="ECO:0000269" key="6">
    <source>
    </source>
</evidence>
<evidence type="ECO:0000305" key="7"/>
<evidence type="ECO:0007744" key="8">
    <source>
    </source>
</evidence>